<organism>
    <name type="scientific">Salmonella gallinarum (strain 287/91 / NCTC 13346)</name>
    <dbReference type="NCBI Taxonomy" id="550538"/>
    <lineage>
        <taxon>Bacteria</taxon>
        <taxon>Pseudomonadati</taxon>
        <taxon>Pseudomonadota</taxon>
        <taxon>Gammaproteobacteria</taxon>
        <taxon>Enterobacterales</taxon>
        <taxon>Enterobacteriaceae</taxon>
        <taxon>Salmonella</taxon>
    </lineage>
</organism>
<name>RECO_SALG2</name>
<gene>
    <name evidence="1" type="primary">recO</name>
    <name type="ordered locus">SG2616</name>
</gene>
<comment type="function">
    <text evidence="1">Involved in DNA repair and RecF pathway recombination.</text>
</comment>
<comment type="subunit">
    <text evidence="1">Monomer.</text>
</comment>
<comment type="similarity">
    <text evidence="1">Belongs to the RecO family.</text>
</comment>
<keyword id="KW-0227">DNA damage</keyword>
<keyword id="KW-0233">DNA recombination</keyword>
<keyword id="KW-0234">DNA repair</keyword>
<feature type="chain" id="PRO_1000099407" description="DNA repair protein RecO">
    <location>
        <begin position="1"/>
        <end position="242"/>
    </location>
</feature>
<proteinExistence type="inferred from homology"/>
<dbReference type="EMBL" id="AM933173">
    <property type="protein sequence ID" value="CAR38433.1"/>
    <property type="molecule type" value="Genomic_DNA"/>
</dbReference>
<dbReference type="RefSeq" id="WP_000399383.1">
    <property type="nucleotide sequence ID" value="NC_011274.1"/>
</dbReference>
<dbReference type="SMR" id="B5RD47"/>
<dbReference type="KEGG" id="seg:SG2616"/>
<dbReference type="HOGENOM" id="CLU_066645_1_0_6"/>
<dbReference type="Proteomes" id="UP000008321">
    <property type="component" value="Chromosome"/>
</dbReference>
<dbReference type="GO" id="GO:0043590">
    <property type="term" value="C:bacterial nucleoid"/>
    <property type="evidence" value="ECO:0007669"/>
    <property type="project" value="TreeGrafter"/>
</dbReference>
<dbReference type="GO" id="GO:0006310">
    <property type="term" value="P:DNA recombination"/>
    <property type="evidence" value="ECO:0007669"/>
    <property type="project" value="UniProtKB-UniRule"/>
</dbReference>
<dbReference type="GO" id="GO:0006302">
    <property type="term" value="P:double-strand break repair"/>
    <property type="evidence" value="ECO:0007669"/>
    <property type="project" value="TreeGrafter"/>
</dbReference>
<dbReference type="FunFam" id="1.20.1440.120:FF:000001">
    <property type="entry name" value="DNA repair protein RecO"/>
    <property type="match status" value="1"/>
</dbReference>
<dbReference type="FunFam" id="2.40.50.140:FF:000074">
    <property type="entry name" value="DNA repair protein RecO"/>
    <property type="match status" value="1"/>
</dbReference>
<dbReference type="Gene3D" id="2.40.50.140">
    <property type="entry name" value="Nucleic acid-binding proteins"/>
    <property type="match status" value="1"/>
</dbReference>
<dbReference type="Gene3D" id="1.20.1440.120">
    <property type="entry name" value="Recombination protein O, C-terminal domain"/>
    <property type="match status" value="1"/>
</dbReference>
<dbReference type="HAMAP" id="MF_00201">
    <property type="entry name" value="RecO"/>
    <property type="match status" value="1"/>
</dbReference>
<dbReference type="InterPro" id="IPR037278">
    <property type="entry name" value="ARFGAP/RecO"/>
</dbReference>
<dbReference type="InterPro" id="IPR022572">
    <property type="entry name" value="DNA_rep/recomb_RecO_N"/>
</dbReference>
<dbReference type="InterPro" id="IPR012340">
    <property type="entry name" value="NA-bd_OB-fold"/>
</dbReference>
<dbReference type="InterPro" id="IPR003717">
    <property type="entry name" value="RecO"/>
</dbReference>
<dbReference type="InterPro" id="IPR042242">
    <property type="entry name" value="RecO_C"/>
</dbReference>
<dbReference type="NCBIfam" id="TIGR00613">
    <property type="entry name" value="reco"/>
    <property type="match status" value="1"/>
</dbReference>
<dbReference type="PANTHER" id="PTHR33991">
    <property type="entry name" value="DNA REPAIR PROTEIN RECO"/>
    <property type="match status" value="1"/>
</dbReference>
<dbReference type="PANTHER" id="PTHR33991:SF1">
    <property type="entry name" value="DNA REPAIR PROTEIN RECO"/>
    <property type="match status" value="1"/>
</dbReference>
<dbReference type="Pfam" id="PF02565">
    <property type="entry name" value="RecO_C"/>
    <property type="match status" value="1"/>
</dbReference>
<dbReference type="Pfam" id="PF11967">
    <property type="entry name" value="RecO_N"/>
    <property type="match status" value="1"/>
</dbReference>
<dbReference type="SUPFAM" id="SSF57863">
    <property type="entry name" value="ArfGap/RecO-like zinc finger"/>
    <property type="match status" value="1"/>
</dbReference>
<dbReference type="SUPFAM" id="SSF50249">
    <property type="entry name" value="Nucleic acid-binding proteins"/>
    <property type="match status" value="1"/>
</dbReference>
<sequence length="242" mass="27576">MEGWQRAFVLHSRPWSETSLMLDVFTEESGRVRLVAKGARSKRSNLKGALQPFTPLLLRYSGRGEVKTLRSAEAVSLALPLSGITLYSGLYINELLSRVLEYETRFSELFFDYLNCIQALAGTTGSPEPALRRFELALLGHLGYGVNFTHCAGSGERVDDTMTYRYREEKGFFASVVIDNNTFTGRHLKALEEREFPDVDTLRASKRFTRMALKPYLGGKPLKSRELFRQFMPKRTVKMKKD</sequence>
<accession>B5RD47</accession>
<reference key="1">
    <citation type="journal article" date="2008" name="Genome Res.">
        <title>Comparative genome analysis of Salmonella enteritidis PT4 and Salmonella gallinarum 287/91 provides insights into evolutionary and host adaptation pathways.</title>
        <authorList>
            <person name="Thomson N.R."/>
            <person name="Clayton D.J."/>
            <person name="Windhorst D."/>
            <person name="Vernikos G."/>
            <person name="Davidson S."/>
            <person name="Churcher C."/>
            <person name="Quail M.A."/>
            <person name="Stevens M."/>
            <person name="Jones M.A."/>
            <person name="Watson M."/>
            <person name="Barron A."/>
            <person name="Layton A."/>
            <person name="Pickard D."/>
            <person name="Kingsley R.A."/>
            <person name="Bignell A."/>
            <person name="Clark L."/>
            <person name="Harris B."/>
            <person name="Ormond D."/>
            <person name="Abdellah Z."/>
            <person name="Brooks K."/>
            <person name="Cherevach I."/>
            <person name="Chillingworth T."/>
            <person name="Woodward J."/>
            <person name="Norberczak H."/>
            <person name="Lord A."/>
            <person name="Arrowsmith C."/>
            <person name="Jagels K."/>
            <person name="Moule S."/>
            <person name="Mungall K."/>
            <person name="Saunders M."/>
            <person name="Whitehead S."/>
            <person name="Chabalgoity J.A."/>
            <person name="Maskell D."/>
            <person name="Humphreys T."/>
            <person name="Roberts M."/>
            <person name="Barrow P.A."/>
            <person name="Dougan G."/>
            <person name="Parkhill J."/>
        </authorList>
    </citation>
    <scope>NUCLEOTIDE SEQUENCE [LARGE SCALE GENOMIC DNA]</scope>
    <source>
        <strain>287/91 / NCTC 13346</strain>
    </source>
</reference>
<evidence type="ECO:0000255" key="1">
    <source>
        <dbReference type="HAMAP-Rule" id="MF_00201"/>
    </source>
</evidence>
<protein>
    <recommendedName>
        <fullName evidence="1">DNA repair protein RecO</fullName>
    </recommendedName>
    <alternativeName>
        <fullName evidence="1">Recombination protein O</fullName>
    </alternativeName>
</protein>